<comment type="function">
    <text evidence="4 5 6 7 8 9 10 11 13 15 16 17 18 19 21 22 23 24 25 26">Plasma membrane osmosensor that activates the high osmolarity glycerol (HOG) MAPK signaling pathway in response to high osmolarity. Detects changes in external osmolarity and activates PBS2 through the stimulation of STE11 and targets PBS2 to the plasma membrane. PBS2 activation leads to changes in glycerol production that helps to balance the intracellular and external osmotic pressures. Activates also HOG1 in response to heat stress and mediates resistance to oxidative stress. Involved in the regulation of the mating pathway. May be a receptor that feeds into the pseudohyphal growth pathway.</text>
</comment>
<comment type="subunit">
    <text evidence="6 14 15 16 17 18 19 20 25">Forms homooligomers. Interacts (via the SH3 domain) with PBS2. Interacts with FUS1, STE11, STE50 and RNA polymerase II.</text>
</comment>
<comment type="interaction">
    <interactant intactId="EBI-18140">
        <id>P40073</id>
    </interactant>
    <interactant intactId="EBI-1994">
        <id>P42884</id>
        <label>AAD14</label>
    </interactant>
    <organismsDiffer>false</organismsDiffer>
    <experiments>2</experiments>
</comment>
<comment type="interaction">
    <interactant intactId="EBI-18140">
        <id>P40073</id>
    </interactant>
    <interactant intactId="EBI-26374">
        <id>P36122</id>
        <label>BCH2</label>
    </interactant>
    <organismsDiffer>false</organismsDiffer>
    <experiments>2</experiments>
</comment>
<comment type="interaction">
    <interactant intactId="EBI-18140">
        <id>P40073</id>
    </interactant>
    <interactant intactId="EBI-31510">
        <id>Q07533</id>
        <label>CYK3</label>
    </interactant>
    <organismsDiffer>false</organismsDiffer>
    <experiments>4</experiments>
</comment>
<comment type="interaction">
    <interactant intactId="EBI-18140">
        <id>P40073</id>
    </interactant>
    <interactant intactId="EBI-7179">
        <id>P11710</id>
        <label>FUS1</label>
    </interactant>
    <organismsDiffer>false</organismsDiffer>
    <experiments>7</experiments>
</comment>
<comment type="interaction">
    <interactant intactId="EBI-18140">
        <id>P40073</id>
    </interactant>
    <interactant intactId="EBI-7612">
        <id>P40036</id>
        <label>GIP2</label>
    </interactant>
    <organismsDiffer>false</organismsDiffer>
    <experiments>2</experiments>
</comment>
<comment type="interaction">
    <interactant intactId="EBI-18140">
        <id>P40073</id>
    </interactant>
    <interactant intactId="EBI-5412">
        <id>Q05080</id>
        <label>HOF1</label>
    </interactant>
    <organismsDiffer>false</organismsDiffer>
    <experiments>5</experiments>
</comment>
<comment type="interaction">
    <interactant intactId="EBI-18140">
        <id>P40073</id>
    </interactant>
    <interactant intactId="EBI-28955">
        <id>P53901</id>
        <label>INN1</label>
    </interactant>
    <organismsDiffer>false</organismsDiffer>
    <experiments>4</experiments>
</comment>
<comment type="interaction">
    <interactant intactId="EBI-18140">
        <id>P40073</id>
    </interactant>
    <interactant intactId="EBI-10022">
        <id>Q12446</id>
        <label>LAS17</label>
    </interactant>
    <organismsDiffer>false</organismsDiffer>
    <experiments>5</experiments>
</comment>
<comment type="interaction">
    <interactant intactId="EBI-18140">
        <id>P40073</id>
    </interactant>
    <interactant intactId="EBI-23857">
        <id>P53153</id>
        <label>LCL3</label>
    </interactant>
    <organismsDiffer>false</organismsDiffer>
    <experiments>2</experiments>
</comment>
<comment type="interaction">
    <interactant intactId="EBI-18140">
        <id>P40073</id>
    </interactant>
    <interactant intactId="EBI-11322">
        <id>P21339</id>
        <label>MSB1</label>
    </interactant>
    <organismsDiffer>false</organismsDiffer>
    <experiments>2</experiments>
</comment>
<comment type="interaction">
    <interactant intactId="EBI-18140">
        <id>P40073</id>
    </interactant>
    <interactant intactId="EBI-12972">
        <id>P08018</id>
        <label>PBS2</label>
    </interactant>
    <organismsDiffer>false</organismsDiffer>
    <experiments>8</experiments>
</comment>
<comment type="interaction">
    <interactant intactId="EBI-18140">
        <id>P40073</id>
    </interactant>
    <interactant intactId="EBI-12980">
        <id>P39081</id>
        <label>PCF11</label>
    </interactant>
    <organismsDiffer>false</organismsDiffer>
    <experiments>2</experiments>
</comment>
<comment type="interaction">
    <interactant intactId="EBI-18140">
        <id>P40073</id>
    </interactant>
    <interactant intactId="EBI-15044">
        <id>P39083</id>
        <label>RGA1</label>
    </interactant>
    <organismsDiffer>false</organismsDiffer>
    <experiments>2</experiments>
</comment>
<comment type="interaction">
    <interactant intactId="EBI-18140">
        <id>P40073</id>
    </interactant>
    <interactant intactId="EBI-18259">
        <id>P23561</id>
        <label>STE11</label>
    </interactant>
    <organismsDiffer>false</organismsDiffer>
    <experiments>3</experiments>
</comment>
<comment type="interaction">
    <interactant intactId="EBI-18140">
        <id>P40073</id>
    </interactant>
    <interactant intactId="EBI-18305">
        <id>P25344</id>
        <label>STE50</label>
    </interactant>
    <organismsDiffer>false</organismsDiffer>
    <experiments>3</experiments>
</comment>
<comment type="interaction">
    <interactant intactId="EBI-18140">
        <id>P40073</id>
    </interactant>
    <interactant intactId="EBI-37117">
        <id>Q06412</id>
        <label>TUS1</label>
    </interactant>
    <organismsDiffer>false</organismsDiffer>
    <experiments>3</experiments>
</comment>
<comment type="subcellular location">
    <subcellularLocation>
        <location>Cell membrane</location>
        <topology>Multi-pass membrane protein</topology>
    </subcellularLocation>
    <subcellularLocation>
        <location>Bud</location>
    </subcellularLocation>
    <subcellularLocation>
        <location>Bud neck</location>
    </subcellularLocation>
    <subcellularLocation>
        <location>Cell projection</location>
    </subcellularLocation>
    <text>Localizes at the tip of the mating projection during conjugation.</text>
</comment>
<comment type="miscellaneous">
    <text evidence="12">Present with 2330 molecules/cell in log phase SD medium.</text>
</comment>
<comment type="similarity">
    <text evidence="27">Belongs to the SHO1 family.</text>
</comment>
<feature type="chain" id="PRO_0000072231" description="High osmolarity signaling protein SHO1">
    <location>
        <begin position="1"/>
        <end position="367"/>
    </location>
</feature>
<feature type="topological domain" description="Cytoplasmic" evidence="1">
    <location>
        <begin position="1"/>
        <end position="32"/>
    </location>
</feature>
<feature type="transmembrane region" description="Helical" evidence="1">
    <location>
        <begin position="33"/>
        <end position="53"/>
    </location>
</feature>
<feature type="topological domain" description="Extracellular" evidence="1">
    <location>
        <begin position="54"/>
        <end position="65"/>
    </location>
</feature>
<feature type="transmembrane region" description="Helical" evidence="1">
    <location>
        <begin position="66"/>
        <end position="86"/>
    </location>
</feature>
<feature type="topological domain" description="Cytoplasmic" evidence="1">
    <location>
        <begin position="87"/>
        <end position="93"/>
    </location>
</feature>
<feature type="transmembrane region" description="Helical" evidence="1">
    <location>
        <begin position="94"/>
        <end position="114"/>
    </location>
</feature>
<feature type="topological domain" description="Extracellular" evidence="1">
    <location>
        <begin position="115"/>
        <end position="122"/>
    </location>
</feature>
<feature type="transmembrane region" description="Helical" evidence="1">
    <location>
        <begin position="123"/>
        <end position="143"/>
    </location>
</feature>
<feature type="topological domain" description="Cytoplasmic" evidence="1">
    <location>
        <begin position="144"/>
        <end position="367"/>
    </location>
</feature>
<feature type="domain" description="SH3" evidence="2">
    <location>
        <begin position="300"/>
        <end position="361"/>
    </location>
</feature>
<feature type="region of interest" description="Disordered" evidence="3">
    <location>
        <begin position="252"/>
        <end position="276"/>
    </location>
</feature>
<feature type="compositionally biased region" description="Low complexity" evidence="3">
    <location>
        <begin position="259"/>
        <end position="272"/>
    </location>
</feature>
<feature type="modified residue" description="Phosphoserine" evidence="20">
    <location>
        <position position="166"/>
    </location>
</feature>
<feature type="glycosylation site" description="N-linked (GlcNAc...) asparagine" evidence="1">
    <location>
        <position position="59"/>
    </location>
</feature>
<feature type="mutagenesis site" description="Diminishes the formation of oligomers, dampens activation of the HOG1 kinase, and impairs growth in high-salt or sorbitol conditions." evidence="20">
    <original>S</original>
    <variation>E</variation>
    <location>
        <position position="166"/>
    </location>
</feature>
<feature type="mutagenesis site" description="Decreases the interaction with PBS2 and leads to decreased HOG pathway response and increased aberrant mating pathway activation." evidence="16">
    <original>Y</original>
    <variation>A</variation>
    <location>
        <position position="309"/>
    </location>
</feature>
<feature type="mutagenesis site" description="Decreases the interaction with PBS2 and leads to decreased HOG pathway response and increased aberrant mating pathway activation." evidence="16">
    <original>D</original>
    <variation>I</variation>
    <variation>H</variation>
    <location>
        <position position="317"/>
    </location>
</feature>
<feature type="mutagenesis site" description="Decreases the interaction with PBS2 and leads to decreased HOG pathway response and increased aberrant mating pathway activation." evidence="16">
    <original>Y</original>
    <variation>A</variation>
    <variation>F</variation>
    <variation>I</variation>
    <variation>M</variation>
    <location>
        <position position="355"/>
    </location>
</feature>
<feature type="strand" evidence="28">
    <location>
        <begin position="302"/>
        <end position="309"/>
    </location>
</feature>
<feature type="strand" evidence="28">
    <location>
        <begin position="315"/>
        <end position="317"/>
    </location>
</feature>
<feature type="strand" evidence="28">
    <location>
        <begin position="328"/>
        <end position="332"/>
    </location>
</feature>
<feature type="strand" evidence="28">
    <location>
        <begin position="336"/>
        <end position="342"/>
    </location>
</feature>
<feature type="strand" evidence="28">
    <location>
        <begin position="348"/>
        <end position="352"/>
    </location>
</feature>
<feature type="helix" evidence="28">
    <location>
        <begin position="353"/>
        <end position="355"/>
    </location>
</feature>
<feature type="strand" evidence="28">
    <location>
        <begin position="356"/>
        <end position="363"/>
    </location>
</feature>
<sequence>MSISSKIRPTPRKPSRMATDHSFKMKKFYADPFAISSISLAIVSWVIAIGGSISSASTNESFPRFTWWGIVYQFLIICSLMLFYCFDLVDHYRIFITTSIAVAFVYNTNSATNLVYADGPKKAAASAGVILLSIINLIWILYYGGDNASPTNRWIDSFSIKGIRPSPLENSLHRARRRGNRNTTPYQNNVYNDAIRDSGYATQFDGYPQQQPSHTNYVSSTALAGFENTQPNTSEAVNLHLNTLQQRINSASNAKETNDNSNNQTNTNIGNTFDTDFSNGNTETTMGDTLGLYSDIGDDNFIYKAKALYPYDADDDDAYEISFEQNEILQVSDIEGRWWKARRANGETGIIPSNYVQLIDGPEEMHR</sequence>
<keyword id="KW-0002">3D-structure</keyword>
<keyword id="KW-1003">Cell membrane</keyword>
<keyword id="KW-0966">Cell projection</keyword>
<keyword id="KW-0325">Glycoprotein</keyword>
<keyword id="KW-0472">Membrane</keyword>
<keyword id="KW-0597">Phosphoprotein</keyword>
<keyword id="KW-1185">Reference proteome</keyword>
<keyword id="KW-0728">SH3 domain</keyword>
<keyword id="KW-0346">Stress response</keyword>
<keyword id="KW-0812">Transmembrane</keyword>
<keyword id="KW-1133">Transmembrane helix</keyword>
<evidence type="ECO:0000255" key="1"/>
<evidence type="ECO:0000255" key="2">
    <source>
        <dbReference type="PROSITE-ProRule" id="PRU00192"/>
    </source>
</evidence>
<evidence type="ECO:0000256" key="3">
    <source>
        <dbReference type="SAM" id="MobiDB-lite"/>
    </source>
</evidence>
<evidence type="ECO:0000269" key="4">
    <source>
    </source>
</evidence>
<evidence type="ECO:0000269" key="5">
    <source>
    </source>
</evidence>
<evidence type="ECO:0000269" key="6">
    <source>
    </source>
</evidence>
<evidence type="ECO:0000269" key="7">
    <source>
    </source>
</evidence>
<evidence type="ECO:0000269" key="8">
    <source>
    </source>
</evidence>
<evidence type="ECO:0000269" key="9">
    <source>
    </source>
</evidence>
<evidence type="ECO:0000269" key="10">
    <source>
    </source>
</evidence>
<evidence type="ECO:0000269" key="11">
    <source>
    </source>
</evidence>
<evidence type="ECO:0000269" key="12">
    <source>
    </source>
</evidence>
<evidence type="ECO:0000269" key="13">
    <source>
    </source>
</evidence>
<evidence type="ECO:0000269" key="14">
    <source>
    </source>
</evidence>
<evidence type="ECO:0000269" key="15">
    <source>
    </source>
</evidence>
<evidence type="ECO:0000269" key="16">
    <source>
    </source>
</evidence>
<evidence type="ECO:0000269" key="17">
    <source>
    </source>
</evidence>
<evidence type="ECO:0000269" key="18">
    <source>
    </source>
</evidence>
<evidence type="ECO:0000269" key="19">
    <source>
    </source>
</evidence>
<evidence type="ECO:0000269" key="20">
    <source>
    </source>
</evidence>
<evidence type="ECO:0000269" key="21">
    <source>
    </source>
</evidence>
<evidence type="ECO:0000269" key="22">
    <source>
    </source>
</evidence>
<evidence type="ECO:0000269" key="23">
    <source>
    </source>
</evidence>
<evidence type="ECO:0000269" key="24">
    <source>
    </source>
</evidence>
<evidence type="ECO:0000269" key="25">
    <source>
    </source>
</evidence>
<evidence type="ECO:0000269" key="26">
    <source>
    </source>
</evidence>
<evidence type="ECO:0000305" key="27"/>
<evidence type="ECO:0007829" key="28">
    <source>
        <dbReference type="PDB" id="2VKN"/>
    </source>
</evidence>
<gene>
    <name type="primary">SHO1</name>
    <name type="synonym">SSU81</name>
    <name type="ordered locus">YER118C</name>
</gene>
<protein>
    <recommendedName>
        <fullName>High osmolarity signaling protein SHO1</fullName>
    </recommendedName>
    <alternativeName>
        <fullName>Osmosensor SHO1</fullName>
    </alternativeName>
    <alternativeName>
        <fullName>Suppressor of SUA8-1 mutation</fullName>
    </alternativeName>
    <alternativeName>
        <fullName>Synthetic high osmolarity-sensitive protein 1</fullName>
    </alternativeName>
</protein>
<reference key="1">
    <citation type="submission" date="1994-10" db="EMBL/GenBank/DDBJ databases">
        <authorList>
            <person name="Berroteran R.W."/>
            <person name="Hampsey M."/>
        </authorList>
    </citation>
    <scope>NUCLEOTIDE SEQUENCE [GENOMIC DNA]</scope>
</reference>
<reference key="2">
    <citation type="journal article" date="1995" name="Science">
        <title>Activation of yeast PBS2 MAPKK by MAPKKKs or by binding of an SH3-containing osmosensor.</title>
        <authorList>
            <person name="Maeda T."/>
            <person name="Takekawa M."/>
            <person name="Saito H."/>
        </authorList>
    </citation>
    <scope>NUCLEOTIDE SEQUENCE [GENOMIC DNA]</scope>
    <scope>FUNCTION</scope>
</reference>
<reference key="3">
    <citation type="journal article" date="1997" name="Nature">
        <title>The nucleotide sequence of Saccharomyces cerevisiae chromosome V.</title>
        <authorList>
            <person name="Dietrich F.S."/>
            <person name="Mulligan J.T."/>
            <person name="Hennessy K.M."/>
            <person name="Yelton M.A."/>
            <person name="Allen E."/>
            <person name="Araujo R."/>
            <person name="Aviles E."/>
            <person name="Berno A."/>
            <person name="Brennan T."/>
            <person name="Carpenter J."/>
            <person name="Chen E."/>
            <person name="Cherry J.M."/>
            <person name="Chung E."/>
            <person name="Duncan M."/>
            <person name="Guzman E."/>
            <person name="Hartzell G."/>
            <person name="Hunicke-Smith S."/>
            <person name="Hyman R.W."/>
            <person name="Kayser A."/>
            <person name="Komp C."/>
            <person name="Lashkari D."/>
            <person name="Lew H."/>
            <person name="Lin D."/>
            <person name="Mosedale D."/>
            <person name="Nakahara K."/>
            <person name="Namath A."/>
            <person name="Norgren R."/>
            <person name="Oefner P."/>
            <person name="Oh C."/>
            <person name="Petel F.X."/>
            <person name="Roberts D."/>
            <person name="Sehl P."/>
            <person name="Schramm S."/>
            <person name="Shogren T."/>
            <person name="Smith V."/>
            <person name="Taylor P."/>
            <person name="Wei Y."/>
            <person name="Botstein D."/>
            <person name="Davis R.W."/>
        </authorList>
    </citation>
    <scope>NUCLEOTIDE SEQUENCE [LARGE SCALE GENOMIC DNA]</scope>
    <source>
        <strain>ATCC 204508 / S288c</strain>
    </source>
</reference>
<reference key="4">
    <citation type="journal article" date="2014" name="G3 (Bethesda)">
        <title>The reference genome sequence of Saccharomyces cerevisiae: Then and now.</title>
        <authorList>
            <person name="Engel S.R."/>
            <person name="Dietrich F.S."/>
            <person name="Fisk D.G."/>
            <person name="Binkley G."/>
            <person name="Balakrishnan R."/>
            <person name="Costanzo M.C."/>
            <person name="Dwight S.S."/>
            <person name="Hitz B.C."/>
            <person name="Karra K."/>
            <person name="Nash R.S."/>
            <person name="Weng S."/>
            <person name="Wong E.D."/>
            <person name="Lloyd P."/>
            <person name="Skrzypek M.S."/>
            <person name="Miyasato S.R."/>
            <person name="Simison M."/>
            <person name="Cherry J.M."/>
        </authorList>
    </citation>
    <scope>GENOME REANNOTATION</scope>
    <source>
        <strain>ATCC 204508 / S288c</strain>
    </source>
</reference>
<reference key="5">
    <citation type="journal article" date="1997" name="Science">
        <title>Osmotic activation of the HOG MAPK pathway via Ste11p MAPKKK: scaffold role of Pbs2p MAPKK.</title>
        <authorList>
            <person name="Posas F."/>
            <person name="Saito H."/>
        </authorList>
    </citation>
    <scope>FUNCTION</scope>
    <scope>INTERACTION WITH PBS2</scope>
</reference>
<reference key="6">
    <citation type="journal article" date="1998" name="Genes Dev.">
        <title>The Hog1 MAPK prevents cross talk between the HOG and pheromone response MAPK pathways in Saccharomyces cerevisiae.</title>
        <authorList>
            <person name="O'Rourke S.M."/>
            <person name="Herskowitz I."/>
        </authorList>
    </citation>
    <scope>FUNCTION</scope>
</reference>
<reference key="7">
    <citation type="journal article" date="2000" name="EMBO J.">
        <title>Yeast Cdc42 GTPase and Ste20 PAK-like kinase regulate Sho1-dependent activation of the Hog1 MAPK pathway.</title>
        <authorList>
            <person name="Raitt D.C."/>
            <person name="Posas F."/>
            <person name="Saito H."/>
        </authorList>
    </citation>
    <scope>FUNCTION</scope>
    <scope>SUBCELLULAR LOCATION</scope>
    <scope>INTERACTION WITH PBS2</scope>
</reference>
<reference key="8">
    <citation type="journal article" date="2000" name="Free Radic. Biol. Med.">
        <title>The Saccharomyces cerevisiae Sln1p-Ssk1p two-component system mediates response to oxidative stress and in an oxidant-specific fashion.</title>
        <authorList>
            <person name="Singh K.K."/>
        </authorList>
    </citation>
    <scope>FUNCTION</scope>
</reference>
<reference key="9">
    <citation type="journal article" date="2000" name="J. Bacteriol.">
        <title>Calcofluor antifungal action depends on chitin and a functional high-osmolarity glycerol response (HOG) pathway: evidence for a physiological role of the Saccharomyces cerevisiae HOG pathway under noninducing conditions.</title>
        <authorList>
            <person name="Garcia-Rodriguez L.J."/>
            <person name="Duran A."/>
            <person name="Roncero C."/>
        </authorList>
    </citation>
    <scope>FUNCTION</scope>
</reference>
<reference key="10">
    <citation type="journal article" date="2000" name="Mol. Microbiol.">
        <title>Response of Saccharomyces cerevisiae to severe osmotic stress: evidence for a novel activation mechanism of the HOG MAP kinase pathway.</title>
        <authorList>
            <person name="Van Wuytswinkel O."/>
            <person name="Reiser V."/>
            <person name="Siderius M."/>
            <person name="Kelders M.C."/>
            <person name="Ammerer G."/>
            <person name="Ruis H."/>
            <person name="Mager W.H."/>
        </authorList>
    </citation>
    <scope>FUNCTION</scope>
</reference>
<reference key="11">
    <citation type="journal article" date="2000" name="Nat. Cell Biol.">
        <title>Polarized localization of yeast Pbs2 depends on osmostress, the membrane protein Sho1 and Cdc42.</title>
        <authorList>
            <person name="Reiser V."/>
            <person name="Salah S.M."/>
            <person name="Ammerer G."/>
        </authorList>
    </citation>
    <scope>FUNCTION</scope>
    <scope>SUBCELLULAR LOCATION</scope>
</reference>
<reference key="12">
    <citation type="journal article" date="2001" name="Genes Genet. Syst.">
        <title>Defects in glycosylphosphatidylinositol (GPI) anchor synthesis activate Hog1 kinase and confer copper-resistance in Saccharomyces cerevisisae.</title>
        <authorList>
            <person name="Toh-e A."/>
            <person name="Oguchi T."/>
        </authorList>
    </citation>
    <scope>FUNCTION</scope>
</reference>
<reference key="13">
    <citation type="journal article" date="2002" name="Eukaryot. Cell">
        <title>Heat stress activates the yeast high-osmolarity glycerol mitogen-activated protein kinase pathway, and protein tyrosine phosphatases are essential under heat stress.</title>
        <authorList>
            <person name="Winkler A."/>
            <person name="Arkind C."/>
            <person name="Mattison C.P."/>
            <person name="Burkholder A."/>
            <person name="Knoche K."/>
            <person name="Ota I.M."/>
        </authorList>
    </citation>
    <scope>FUNCTION</scope>
</reference>
<reference key="14">
    <citation type="journal article" date="2002" name="Proc. Natl. Acad. Sci. U.S.A.">
        <title>Cell surface polarization during yeast mating.</title>
        <authorList>
            <person name="Bagnat M."/>
            <person name="Simons K."/>
        </authorList>
    </citation>
    <scope>SUBCELLULAR LOCATION</scope>
</reference>
<reference key="15">
    <citation type="journal article" date="2003" name="Nature">
        <title>Global analysis of protein expression in yeast.</title>
        <authorList>
            <person name="Ghaemmaghami S."/>
            <person name="Huh W.-K."/>
            <person name="Bower K."/>
            <person name="Howson R.W."/>
            <person name="Belle A."/>
            <person name="Dephoure N."/>
            <person name="O'Shea E.K."/>
            <person name="Weissman J.S."/>
        </authorList>
    </citation>
    <scope>LEVEL OF PROTEIN EXPRESSION [LARGE SCALE ANALYSIS]</scope>
</reference>
<reference key="16">
    <citation type="journal article" date="2003" name="Nature">
        <title>Optimization of specificity in a cellular protein interaction network by negative selection.</title>
        <authorList>
            <person name="Zarrinpar A."/>
            <person name="Park S.H."/>
            <person name="Lim W.A."/>
        </authorList>
    </citation>
    <scope>DOMAIN</scope>
    <scope>INTERACTION WITH PBS2</scope>
</reference>
<reference key="17">
    <citation type="journal article" date="2003" name="Science">
        <title>Rewiring MAP kinase pathways using alternative scaffold assembly mechanisms.</title>
        <authorList>
            <person name="Park S.H."/>
            <person name="Zarrinpar A."/>
            <person name="Lim W.A."/>
        </authorList>
    </citation>
    <scope>FUNCTION</scope>
</reference>
<reference key="18">
    <citation type="journal article" date="2004" name="Genes Dev.">
        <title>A signaling mucin at the head of the Cdc42- and MAPK-dependent filamentous growth pathway in yeast.</title>
        <authorList>
            <person name="Cullen P.J."/>
            <person name="Sabbagh W. Jr."/>
            <person name="Graham E."/>
            <person name="Irick M.M."/>
            <person name="van Olden E.K."/>
            <person name="Neal C."/>
            <person name="Delrow J."/>
            <person name="Bardwell L."/>
            <person name="Sprague G.F. Jr."/>
        </authorList>
    </citation>
    <scope>FUNCTION</scope>
    <scope>INTERACTION WITH MSB2</scope>
</reference>
<reference key="19">
    <citation type="journal article" date="2004" name="Genetics">
        <title>Fus1p interacts with components of the Hog1p mitogen-activated protein kinase and Cdc42p morphogenesis signaling pathways to control cell fusion during yeast mating.</title>
        <authorList>
            <person name="Nelson B."/>
            <person name="Parsons A.B."/>
            <person name="Evangelista M."/>
            <person name="Schaefer K."/>
            <person name="Kennedy K."/>
            <person name="Ritchie S."/>
            <person name="Petryshen T.L."/>
            <person name="Boone C."/>
        </authorList>
    </citation>
    <scope>FUNCTION</scope>
    <scope>INTERACTION WITH FUS1</scope>
</reference>
<reference key="20">
    <citation type="journal article" date="2004" name="Mol. Biol. Cell">
        <title>Unique and redundant roles for HOG MAPK pathway components as revealed by whole-genome expression analysis.</title>
        <authorList>
            <person name="O'Rourke S.M."/>
            <person name="Herskowitz I."/>
        </authorList>
    </citation>
    <scope>FUNCTION</scope>
</reference>
<reference key="21">
    <citation type="journal article" date="2004" name="Mol. Cell">
        <title>Protein-protein interaction affinity plays a crucial role in controlling the Sho1p-mediated signal transduction pathway in yeast.</title>
        <authorList>
            <person name="Marles J.A."/>
            <person name="Dahesh S."/>
            <person name="Haynes J."/>
            <person name="Andrews B.J."/>
            <person name="Davidson A.R."/>
        </authorList>
    </citation>
    <scope>FUNCTION</scope>
    <scope>INTERACTION WITH PBS2</scope>
    <scope>DOMAIN</scope>
    <scope>MUTAGENESIS OF TYR-309; ASP-317 AND TYR-355</scope>
</reference>
<reference key="22">
    <citation type="journal article" date="2004" name="Mol. Cell">
        <title>Sho1 and Pbs2 act as coscaffolds linking components in the yeast high osmolarity MAP kinase pathway.</title>
        <authorList>
            <person name="Zarrinpar A."/>
            <person name="Bhattacharyya R.P."/>
            <person name="Nittler M.P."/>
            <person name="Lim W.A."/>
        </authorList>
    </citation>
    <scope>FUNCTION</scope>
    <scope>INTERACTION WITH STE11</scope>
</reference>
<reference key="23">
    <citation type="journal article" date="2005" name="Mol. Cell. Proteomics">
        <title>Quantitative phosphoproteomics applied to the yeast pheromone signaling pathway.</title>
        <authorList>
            <person name="Gruhler A."/>
            <person name="Olsen J.V."/>
            <person name="Mohammed S."/>
            <person name="Mortensen P."/>
            <person name="Faergeman N.J."/>
            <person name="Mann M."/>
            <person name="Jensen O.N."/>
        </authorList>
    </citation>
    <scope>IDENTIFICATION BY MASS SPECTROMETRY [LARGE SCALE ANALYSIS]</scope>
    <source>
        <strain>YAL6B</strain>
    </source>
</reference>
<reference key="24">
    <citation type="journal article" date="2006" name="EMBO J.">
        <title>Adaptor functions of Cdc42, Ste50, and Sho1 in the yeast osmoregulatory HOG MAPK pathway.</title>
        <authorList>
            <person name="Tatebayashi K."/>
            <person name="Yamamoto K."/>
            <person name="Tanaka K."/>
            <person name="Tomida T."/>
            <person name="Maruoka T."/>
            <person name="Kasukawa E."/>
            <person name="Saito H."/>
        </authorList>
    </citation>
    <scope>FUNCTION</scope>
    <scope>SUBCELLULAR LOCATION</scope>
    <scope>INTERACTION WITH STE11 AND STE50</scope>
</reference>
<reference key="25">
    <citation type="journal article" date="2006" name="Proc. Natl. Acad. Sci. U.S.A.">
        <title>A global topology map of the Saccharomyces cerevisiae membrane proteome.</title>
        <authorList>
            <person name="Kim H."/>
            <person name="Melen K."/>
            <person name="Oesterberg M."/>
            <person name="von Heijne G."/>
        </authorList>
    </citation>
    <scope>TOPOLOGY [LARGE SCALE ANALYSIS]</scope>
    <source>
        <strain>ATCC 208353 / W303-1A</strain>
    </source>
</reference>
<reference key="26">
    <citation type="journal article" date="2007" name="Curr. Biol.">
        <title>A systems-biology analysis of feedback inhibition in the Sho1 osmotic-stress-response pathway.</title>
        <authorList>
            <person name="Hao N."/>
            <person name="Behar M."/>
            <person name="Parnell S.C."/>
            <person name="Torres M.P."/>
            <person name="Borchers C.H."/>
            <person name="Elston T.C."/>
            <person name="Dohlman H.G."/>
        </authorList>
    </citation>
    <scope>PHOSPHORYLATION AT SER-166</scope>
    <scope>MUTAGENESIS OF SER-166</scope>
    <scope>SUBUNIT</scope>
</reference>
<reference key="27">
    <citation type="journal article" date="2008" name="Mol. Cell. Proteomics">
        <title>A multidimensional chromatography technology for in-depth phosphoproteome analysis.</title>
        <authorList>
            <person name="Albuquerque C.P."/>
            <person name="Smolka M.B."/>
            <person name="Payne S.H."/>
            <person name="Bafna V."/>
            <person name="Eng J."/>
            <person name="Zhou H."/>
        </authorList>
    </citation>
    <scope>IDENTIFICATION BY MASS SPECTROMETRY [LARGE SCALE ANALYSIS]</scope>
</reference>
<reference key="28">
    <citation type="journal article" date="2008" name="Proc. Natl. Acad. Sci. U.S.A.">
        <title>Signal processing by the HOG MAP kinase pathway.</title>
        <authorList>
            <person name="Hersen P."/>
            <person name="McClean M.N."/>
            <person name="Mahadevan L."/>
            <person name="Ramanathan S."/>
        </authorList>
    </citation>
    <scope>FUNCTION</scope>
</reference>
<reference key="29">
    <citation type="journal article" date="2009" name="Mol. Biol. Cell">
        <title>The signaling mucins Msb2 and Hkr1 differentially regulate the filamentation mitogen-activated protein kinase pathway and contribute to a multimodal response.</title>
        <authorList>
            <person name="Pitoniak A."/>
            <person name="Birkaya B."/>
            <person name="Dionne H.M."/>
            <person name="Vadaie N."/>
            <person name="Cullen P.J."/>
        </authorList>
    </citation>
    <scope>FUNCTION</scope>
</reference>
<reference key="30">
    <citation type="journal article" date="2009" name="Sci. Signal.">
        <title>Dynamic signaling in the Hog1 MAPK pathway relies on high basal signal transduction.</title>
        <authorList>
            <person name="Macia J."/>
            <person name="Regot S."/>
            <person name="Peeters T."/>
            <person name="Conde N."/>
            <person name="Sole R."/>
            <person name="Posas F."/>
        </authorList>
    </citation>
    <scope>FUNCTION</scope>
</reference>
<reference key="31">
    <citation type="journal article" date="2009" name="Science">
        <title>Global analysis of Cdk1 substrate phosphorylation sites provides insights into evolution.</title>
        <authorList>
            <person name="Holt L.J."/>
            <person name="Tuch B.B."/>
            <person name="Villen J."/>
            <person name="Johnson A.D."/>
            <person name="Gygi S.P."/>
            <person name="Morgan D.O."/>
        </authorList>
    </citation>
    <scope>IDENTIFICATION BY MASS SPECTROMETRY [LARGE SCALE ANALYSIS]</scope>
</reference>
<reference key="32">
    <citation type="submission" date="2009-02" db="PDB data bank">
        <title>Structural genomics of yeast SH3 domains.</title>
        <authorList>
            <person name="Kursula P."/>
            <person name="Kursula I."/>
            <person name="Song Y.H."/>
            <person name="Paraskevopoulos M."/>
            <person name="Wilmanns M."/>
        </authorList>
    </citation>
    <scope>X-RAY CRYSTALLOGRAPHY (2.05 ANGSTROMS) OF 298-367</scope>
</reference>
<name>SHO1_YEAST</name>
<organism>
    <name type="scientific">Saccharomyces cerevisiae (strain ATCC 204508 / S288c)</name>
    <name type="common">Baker's yeast</name>
    <dbReference type="NCBI Taxonomy" id="559292"/>
    <lineage>
        <taxon>Eukaryota</taxon>
        <taxon>Fungi</taxon>
        <taxon>Dikarya</taxon>
        <taxon>Ascomycota</taxon>
        <taxon>Saccharomycotina</taxon>
        <taxon>Saccharomycetes</taxon>
        <taxon>Saccharomycetales</taxon>
        <taxon>Saccharomycetaceae</taxon>
        <taxon>Saccharomyces</taxon>
    </lineage>
</organism>
<accession>P40073</accession>
<accession>D3DM24</accession>
<dbReference type="EMBL" id="U15653">
    <property type="protein sequence ID" value="AAA61904.1"/>
    <property type="molecule type" value="Genomic_DNA"/>
</dbReference>
<dbReference type="EMBL" id="L41926">
    <property type="protein sequence ID" value="AAC41664.1"/>
    <property type="molecule type" value="Genomic_DNA"/>
</dbReference>
<dbReference type="EMBL" id="U18916">
    <property type="protein sequence ID" value="AAC03216.1"/>
    <property type="molecule type" value="Genomic_DNA"/>
</dbReference>
<dbReference type="EMBL" id="BK006939">
    <property type="protein sequence ID" value="DAA07778.1"/>
    <property type="molecule type" value="Genomic_DNA"/>
</dbReference>
<dbReference type="PIR" id="S50621">
    <property type="entry name" value="S50621"/>
</dbReference>
<dbReference type="RefSeq" id="NP_011043.1">
    <property type="nucleotide sequence ID" value="NM_001179008.1"/>
</dbReference>
<dbReference type="PDB" id="2VKN">
    <property type="method" value="X-ray"/>
    <property type="resolution" value="2.05 A"/>
    <property type="chains" value="A=298-367"/>
</dbReference>
<dbReference type="PDBsum" id="2VKN"/>
<dbReference type="SMR" id="P40073"/>
<dbReference type="BioGRID" id="36863">
    <property type="interactions" value="292"/>
</dbReference>
<dbReference type="ComplexPortal" id="CPX-1140">
    <property type="entry name" value="HICS complex"/>
</dbReference>
<dbReference type="DIP" id="DIP-2472N"/>
<dbReference type="FunCoup" id="P40073">
    <property type="interactions" value="289"/>
</dbReference>
<dbReference type="IntAct" id="P40073">
    <property type="interactions" value="78"/>
</dbReference>
<dbReference type="MINT" id="P40073"/>
<dbReference type="STRING" id="4932.YER118C"/>
<dbReference type="GlyCosmos" id="P40073">
    <property type="glycosylation" value="1 site, No reported glycans"/>
</dbReference>
<dbReference type="GlyGen" id="P40073">
    <property type="glycosylation" value="2 sites"/>
</dbReference>
<dbReference type="iPTMnet" id="P40073"/>
<dbReference type="PaxDb" id="4932-YER118C"/>
<dbReference type="PeptideAtlas" id="P40073"/>
<dbReference type="EnsemblFungi" id="YER118C_mRNA">
    <property type="protein sequence ID" value="YER118C"/>
    <property type="gene ID" value="YER118C"/>
</dbReference>
<dbReference type="GeneID" id="856854"/>
<dbReference type="KEGG" id="sce:YER118C"/>
<dbReference type="AGR" id="SGD:S000000920"/>
<dbReference type="SGD" id="S000000920">
    <property type="gene designation" value="SHO1"/>
</dbReference>
<dbReference type="VEuPathDB" id="FungiDB:YER118C"/>
<dbReference type="eggNOG" id="ENOG502QW7A">
    <property type="taxonomic scope" value="Eukaryota"/>
</dbReference>
<dbReference type="HOGENOM" id="CLU_043316_0_0_1"/>
<dbReference type="InParanoid" id="P40073"/>
<dbReference type="OMA" id="KNGKWWQ"/>
<dbReference type="OrthoDB" id="5983572at2759"/>
<dbReference type="BioCyc" id="YEAST:G3O-30282-MONOMER"/>
<dbReference type="BioGRID-ORCS" id="856854">
    <property type="hits" value="1 hit in 10 CRISPR screens"/>
</dbReference>
<dbReference type="EvolutionaryTrace" id="P40073"/>
<dbReference type="PRO" id="PR:P40073"/>
<dbReference type="Proteomes" id="UP000002311">
    <property type="component" value="Chromosome V"/>
</dbReference>
<dbReference type="RNAct" id="P40073">
    <property type="molecule type" value="protein"/>
</dbReference>
<dbReference type="GO" id="GO:0071944">
    <property type="term" value="C:cell periphery"/>
    <property type="evidence" value="ECO:0007005"/>
    <property type="project" value="SGD"/>
</dbReference>
<dbReference type="GO" id="GO:0005933">
    <property type="term" value="C:cellular bud"/>
    <property type="evidence" value="ECO:0000314"/>
    <property type="project" value="SGD"/>
</dbReference>
<dbReference type="GO" id="GO:0005935">
    <property type="term" value="C:cellular bud neck"/>
    <property type="evidence" value="ECO:0000314"/>
    <property type="project" value="SGD"/>
</dbReference>
<dbReference type="GO" id="GO:0005783">
    <property type="term" value="C:endoplasmic reticulum"/>
    <property type="evidence" value="ECO:0007005"/>
    <property type="project" value="SGD"/>
</dbReference>
<dbReference type="GO" id="GO:0044697">
    <property type="term" value="C:HICS complex"/>
    <property type="evidence" value="ECO:0000353"/>
    <property type="project" value="SGD"/>
</dbReference>
<dbReference type="GO" id="GO:0043332">
    <property type="term" value="C:mating projection tip"/>
    <property type="evidence" value="ECO:0000314"/>
    <property type="project" value="SGD"/>
</dbReference>
<dbReference type="GO" id="GO:0016020">
    <property type="term" value="C:membrane"/>
    <property type="evidence" value="ECO:0000303"/>
    <property type="project" value="ComplexPortal"/>
</dbReference>
<dbReference type="GO" id="GO:0005886">
    <property type="term" value="C:plasma membrane"/>
    <property type="evidence" value="ECO:0000314"/>
    <property type="project" value="SGD"/>
</dbReference>
<dbReference type="GO" id="GO:0005078">
    <property type="term" value="F:MAP-kinase scaffold activity"/>
    <property type="evidence" value="ECO:0000315"/>
    <property type="project" value="SGD"/>
</dbReference>
<dbReference type="GO" id="GO:0005034">
    <property type="term" value="F:osmosensor activity"/>
    <property type="evidence" value="ECO:0000353"/>
    <property type="project" value="SGD"/>
</dbReference>
<dbReference type="GO" id="GO:0030010">
    <property type="term" value="P:establishment of cell polarity"/>
    <property type="evidence" value="ECO:0000316"/>
    <property type="project" value="SGD"/>
</dbReference>
<dbReference type="GO" id="GO:1902410">
    <property type="term" value="P:mitotic cytokinetic process"/>
    <property type="evidence" value="ECO:0000303"/>
    <property type="project" value="ComplexPortal"/>
</dbReference>
<dbReference type="GO" id="GO:0007231">
    <property type="term" value="P:osmosensory signaling pathway"/>
    <property type="evidence" value="ECO:0000316"/>
    <property type="project" value="SGD"/>
</dbReference>
<dbReference type="GO" id="GO:0007232">
    <property type="term" value="P:osmosensory signaling pathway via Sho1 osmosensor"/>
    <property type="evidence" value="ECO:0000315"/>
    <property type="project" value="SGD"/>
</dbReference>
<dbReference type="GO" id="GO:0030833">
    <property type="term" value="P:regulation of actin filament polymerization"/>
    <property type="evidence" value="ECO:0000318"/>
    <property type="project" value="GO_Central"/>
</dbReference>
<dbReference type="GO" id="GO:0001402">
    <property type="term" value="P:signal transduction involved in filamentous growth"/>
    <property type="evidence" value="ECO:0000315"/>
    <property type="project" value="SGD"/>
</dbReference>
<dbReference type="CDD" id="cd11855">
    <property type="entry name" value="SH3_Sho1p"/>
    <property type="match status" value="1"/>
</dbReference>
<dbReference type="FunFam" id="2.30.30.40:FF:000213">
    <property type="entry name" value="High osmolarity signaling protein SHO1"/>
    <property type="match status" value="1"/>
</dbReference>
<dbReference type="Gene3D" id="2.30.30.40">
    <property type="entry name" value="SH3 Domains"/>
    <property type="match status" value="1"/>
</dbReference>
<dbReference type="InterPro" id="IPR036028">
    <property type="entry name" value="SH3-like_dom_sf"/>
</dbReference>
<dbReference type="InterPro" id="IPR001452">
    <property type="entry name" value="SH3_domain"/>
</dbReference>
<dbReference type="InterPro" id="IPR035522">
    <property type="entry name" value="Sho1_SH3"/>
</dbReference>
<dbReference type="PANTHER" id="PTHR15735">
    <property type="entry name" value="FCH AND DOUBLE SH3 DOMAINS PROTEIN"/>
    <property type="match status" value="1"/>
</dbReference>
<dbReference type="PANTHER" id="PTHR15735:SF20">
    <property type="entry name" value="HIGH OSMOLARITY SIGNALING PROTEIN SHO1"/>
    <property type="match status" value="1"/>
</dbReference>
<dbReference type="Pfam" id="PF00018">
    <property type="entry name" value="SH3_1"/>
    <property type="match status" value="1"/>
</dbReference>
<dbReference type="PRINTS" id="PR00452">
    <property type="entry name" value="SH3DOMAIN"/>
</dbReference>
<dbReference type="SMART" id="SM00326">
    <property type="entry name" value="SH3"/>
    <property type="match status" value="1"/>
</dbReference>
<dbReference type="SUPFAM" id="SSF50044">
    <property type="entry name" value="SH3-domain"/>
    <property type="match status" value="1"/>
</dbReference>
<dbReference type="PROSITE" id="PS50002">
    <property type="entry name" value="SH3"/>
    <property type="match status" value="1"/>
</dbReference>
<proteinExistence type="evidence at protein level"/>